<sequence length="124" mass="13947">MLCPRAAFLVGSFHGVFPGPPASSHWEFWVPSTPVGAYFCPPQPQLTPPNTPKLVSEVEELYKSITALREKLLQAEQSLRNLKDIHMSLEKDVTAMTNSVFIDRQKCMAHRTCYPTILQLAGYQ</sequence>
<protein>
    <recommendedName>
        <fullName>MaFF-interacting protein</fullName>
    </recommendedName>
    <alternativeName>
        <fullName>Tektin-4 like protein PP5644</fullName>
    </alternativeName>
</protein>
<comment type="function">
    <text evidence="2 3">Acts as a coactivator of MAFF transcriptional activity. Inhibits cell growth and colony-forming efficiency.</text>
</comment>
<comment type="subunit">
    <text evidence="2 3">Interacts with MIS18A. Interacts (via its coiled-coil region) with MAFF.</text>
</comment>
<comment type="subcellular location">
    <subcellularLocation>
        <location evidence="3">Cytoplasm</location>
    </subcellularLocation>
    <subcellularLocation>
        <location evidence="3">Nucleus</location>
        <location evidence="3">Nucleolus</location>
    </subcellularLocation>
    <text>Interaction with MAFF induces its translocation from the cytoplasm to the nucleolus.</text>
</comment>
<comment type="tissue specificity">
    <text evidence="2">Strongly expressed in brain, kidney and ovary. Moderately expressed in liver, spleen, thymus, prostate, testis, small intestine and colon. Weakly expressed in heart, placenta, lung and leukocytes.</text>
</comment>
<comment type="similarity">
    <text evidence="4">Belongs to the tektin family.</text>
</comment>
<feature type="chain" id="PRO_0000348286" description="MaFF-interacting protein">
    <location>
        <begin position="1"/>
        <end position="124"/>
    </location>
</feature>
<feature type="coiled-coil region" evidence="1">
    <location>
        <begin position="54"/>
        <end position="96"/>
    </location>
</feature>
<accession>Q8WZ33</accession>
<proteinExistence type="evidence at protein level"/>
<keyword id="KW-0175">Coiled coil</keyword>
<keyword id="KW-0963">Cytoplasm</keyword>
<keyword id="KW-0539">Nucleus</keyword>
<keyword id="KW-1185">Reference proteome</keyword>
<keyword id="KW-0804">Transcription</keyword>
<keyword id="KW-0805">Transcription regulation</keyword>
<reference key="1">
    <citation type="journal article" date="2004" name="Proc. Natl. Acad. Sci. U.S.A.">
        <title>Large-scale cDNA transfection screening for genes related to cancer development and progression.</title>
        <authorList>
            <person name="Wan D."/>
            <person name="Gong Y."/>
            <person name="Qin W."/>
            <person name="Zhang P."/>
            <person name="Li J."/>
            <person name="Wei L."/>
            <person name="Zhou X."/>
            <person name="Li H."/>
            <person name="Qiu X."/>
            <person name="Zhong F."/>
            <person name="He L."/>
            <person name="Yu J."/>
            <person name="Yao G."/>
            <person name="Jiang H."/>
            <person name="Qian L."/>
            <person name="Yu Y."/>
            <person name="Shu H."/>
            <person name="Chen X."/>
            <person name="Xu H."/>
            <person name="Guo M."/>
            <person name="Pan Z."/>
            <person name="Chen Y."/>
            <person name="Ge C."/>
            <person name="Yang S."/>
            <person name="Gu J."/>
        </authorList>
    </citation>
    <scope>NUCLEOTIDE SEQUENCE [LARGE SCALE MRNA]</scope>
</reference>
<reference key="2">
    <citation type="journal article" date="2005" name="Mol. Cell. Biochem.">
        <title>PP5644 interacts with phosphatidylinositol-4-phosphate adaptor protein-1 associated protein-1.</title>
        <authorList>
            <person name="Ye X.-X."/>
            <person name="Lu H."/>
            <person name="Yu Y."/>
            <person name="Ding N."/>
            <person name="Zhang N.-L."/>
            <person name="Huo K.-K."/>
            <person name="Wan D.-F."/>
            <person name="Li Y.-Y."/>
            <person name="Gu J.-R."/>
        </authorList>
    </citation>
    <scope>FUNCTION</scope>
    <scope>INTERACTION WITH MIS18A</scope>
    <scope>TISSUE SPECIFICITY</scope>
</reference>
<reference key="3">
    <citation type="journal article" date="2006" name="Arch. Biochem. Biophys.">
        <title>The novel human gene MIP functions as a co-activator of hMafF.</title>
        <authorList>
            <person name="Ye X."/>
            <person name="Li Y."/>
            <person name="Huang Q."/>
            <person name="Yu Y."/>
            <person name="Yuan H."/>
            <person name="Wang P."/>
            <person name="Wan D."/>
            <person name="Gu J."/>
            <person name="Huo K."/>
            <person name="Li Y.-Y."/>
            <person name="Lu H."/>
        </authorList>
    </citation>
    <scope>FUNCTION</scope>
    <scope>INTERACTION WITH MAFF</scope>
    <scope>SUBCELLULAR LOCATION</scope>
</reference>
<organism>
    <name type="scientific">Homo sapiens</name>
    <name type="common">Human</name>
    <dbReference type="NCBI Taxonomy" id="9606"/>
    <lineage>
        <taxon>Eukaryota</taxon>
        <taxon>Metazoa</taxon>
        <taxon>Chordata</taxon>
        <taxon>Craniata</taxon>
        <taxon>Vertebrata</taxon>
        <taxon>Euteleostomi</taxon>
        <taxon>Mammalia</taxon>
        <taxon>Eutheria</taxon>
        <taxon>Euarchontoglires</taxon>
        <taxon>Primates</taxon>
        <taxon>Haplorrhini</taxon>
        <taxon>Catarrhini</taxon>
        <taxon>Hominidae</taxon>
        <taxon>Homo</taxon>
    </lineage>
</organism>
<evidence type="ECO:0000255" key="1"/>
<evidence type="ECO:0000269" key="2">
    <source>
    </source>
</evidence>
<evidence type="ECO:0000269" key="3">
    <source>
    </source>
</evidence>
<evidence type="ECO:0000305" key="4"/>
<name>MAFIP_HUMAN</name>
<dbReference type="EMBL" id="AF289559">
    <property type="protein sequence ID" value="AAL55743.1"/>
    <property type="molecule type" value="mRNA"/>
</dbReference>
<dbReference type="SMR" id="Q8WZ33"/>
<dbReference type="FunCoup" id="Q8WZ33">
    <property type="interactions" value="1"/>
</dbReference>
<dbReference type="IntAct" id="Q8WZ33">
    <property type="interactions" value="3"/>
</dbReference>
<dbReference type="STRING" id="9606.ENSP00000483280"/>
<dbReference type="iPTMnet" id="Q8WZ33"/>
<dbReference type="PhosphoSitePlus" id="Q8WZ33"/>
<dbReference type="BioMuta" id="HGNC:31102"/>
<dbReference type="MassIVE" id="Q8WZ33"/>
<dbReference type="PaxDb" id="9606-ENSP00000483280"/>
<dbReference type="PeptideAtlas" id="Q8WZ33"/>
<dbReference type="UCSC" id="uc059ghq.1">
    <property type="organism name" value="human"/>
</dbReference>
<dbReference type="AGR" id="HGNC:31102"/>
<dbReference type="GeneCards" id="MAFIP"/>
<dbReference type="HGNC" id="HGNC:31102">
    <property type="gene designation" value="MAFIP"/>
</dbReference>
<dbReference type="HPA" id="ENSG00000277400">
    <property type="expression patterns" value="Low tissue specificity"/>
</dbReference>
<dbReference type="neXtProt" id="NX_Q8WZ33"/>
<dbReference type="VEuPathDB" id="HostDB:ENSG00000277400"/>
<dbReference type="eggNOG" id="KOG2685">
    <property type="taxonomic scope" value="Eukaryota"/>
</dbReference>
<dbReference type="GeneTree" id="ENSGT00910000148674"/>
<dbReference type="HOGENOM" id="CLU_2003146_0_0_1"/>
<dbReference type="InParanoid" id="Q8WZ33"/>
<dbReference type="OMA" id="MAHRTCY"/>
<dbReference type="OrthoDB" id="5788000at2759"/>
<dbReference type="PAN-GO" id="Q8WZ33">
    <property type="GO annotations" value="4 GO annotations based on evolutionary models"/>
</dbReference>
<dbReference type="PhylomeDB" id="Q8WZ33"/>
<dbReference type="SignaLink" id="Q8WZ33"/>
<dbReference type="CD-CODE" id="91857CE7">
    <property type="entry name" value="Nucleolus"/>
</dbReference>
<dbReference type="Pharos" id="Q8WZ33">
    <property type="development level" value="Tdark"/>
</dbReference>
<dbReference type="PRO" id="PR:Q8WZ33"/>
<dbReference type="Proteomes" id="UP000005640">
    <property type="component" value="Unplaced"/>
</dbReference>
<dbReference type="RNAct" id="Q8WZ33">
    <property type="molecule type" value="protein"/>
</dbReference>
<dbReference type="GO" id="GO:0005929">
    <property type="term" value="C:cilium"/>
    <property type="evidence" value="ECO:0007669"/>
    <property type="project" value="UniProtKB-ARBA"/>
</dbReference>
<dbReference type="GO" id="GO:0005737">
    <property type="term" value="C:cytoplasm"/>
    <property type="evidence" value="ECO:0007669"/>
    <property type="project" value="UniProtKB-SubCell"/>
</dbReference>
<dbReference type="GO" id="GO:0005730">
    <property type="term" value="C:nucleolus"/>
    <property type="evidence" value="ECO:0007669"/>
    <property type="project" value="UniProtKB-SubCell"/>
</dbReference>
<dbReference type="GO" id="GO:0060294">
    <property type="term" value="P:cilium movement involved in cell motility"/>
    <property type="evidence" value="ECO:0007669"/>
    <property type="project" value="InterPro"/>
</dbReference>
<dbReference type="InterPro" id="IPR048256">
    <property type="entry name" value="Tektin-like"/>
</dbReference>
<dbReference type="InterPro" id="IPR000435">
    <property type="entry name" value="Tektins"/>
</dbReference>
<dbReference type="PANTHER" id="PTHR19960">
    <property type="entry name" value="TEKTIN"/>
    <property type="match status" value="1"/>
</dbReference>
<dbReference type="PANTHER" id="PTHR19960:SF12">
    <property type="entry name" value="TEKTIN-4"/>
    <property type="match status" value="1"/>
</dbReference>
<dbReference type="Pfam" id="PF03148">
    <property type="entry name" value="Tektin"/>
    <property type="match status" value="1"/>
</dbReference>
<gene>
    <name type="primary">MAFIP</name>
    <name type="synonym">MIP</name>
    <name type="ORF">PP5644</name>
</gene>